<feature type="chain" id="PRO_0000080714" description="Regulator of nonsense transcripts 1 homolog">
    <location>
        <begin position="1"/>
        <end position="1093"/>
    </location>
</feature>
<feature type="domain" description="Upf1 CH-rich" evidence="3">
    <location>
        <begin position="95"/>
        <end position="252"/>
    </location>
</feature>
<feature type="region of interest" description="Disordered" evidence="4">
    <location>
        <begin position="42"/>
        <end position="79"/>
    </location>
</feature>
<feature type="region of interest" description="C3H" evidence="3">
    <location>
        <begin position="103"/>
        <end position="135"/>
    </location>
</feature>
<feature type="region of interest" description="CC/SHH/C" evidence="3">
    <location>
        <begin position="117"/>
        <end position="145"/>
    </location>
</feature>
<feature type="region of interest" description="C4" evidence="3">
    <location>
        <begin position="163"/>
        <end position="193"/>
    </location>
</feature>
<feature type="compositionally biased region" description="Acidic residues" evidence="4">
    <location>
        <begin position="61"/>
        <end position="75"/>
    </location>
</feature>
<feature type="binding site" evidence="3">
    <location>
        <position position="103"/>
    </location>
    <ligand>
        <name>Zn(2+)</name>
        <dbReference type="ChEBI" id="CHEBI:29105"/>
        <label>1</label>
    </ligand>
</feature>
<feature type="binding site" evidence="3">
    <location>
        <position position="106"/>
    </location>
    <ligand>
        <name>Zn(2+)</name>
        <dbReference type="ChEBI" id="CHEBI:29105"/>
        <label>1</label>
    </ligand>
</feature>
<feature type="binding site" evidence="3">
    <location>
        <position position="117"/>
    </location>
    <ligand>
        <name>Zn(2+)</name>
        <dbReference type="ChEBI" id="CHEBI:29105"/>
        <label>2</label>
    </ligand>
</feature>
<feature type="binding site" evidence="3">
    <location>
        <position position="120"/>
    </location>
    <ligand>
        <name>Zn(2+)</name>
        <dbReference type="ChEBI" id="CHEBI:29105"/>
        <label>2</label>
    </ligand>
</feature>
<feature type="binding site" evidence="3">
    <location>
        <position position="125"/>
    </location>
    <ligand>
        <name>Zn(2+)</name>
        <dbReference type="ChEBI" id="CHEBI:29105"/>
        <label>1</label>
    </ligand>
</feature>
<feature type="binding site" evidence="3">
    <location>
        <position position="135"/>
    </location>
    <ligand>
        <name>Zn(2+)</name>
        <dbReference type="ChEBI" id="CHEBI:29105"/>
        <label>1</label>
    </ligand>
</feature>
<feature type="binding site" evidence="3">
    <location>
        <position position="139"/>
    </location>
    <ligand>
        <name>Zn(2+)</name>
        <dbReference type="ChEBI" id="CHEBI:29105"/>
        <label>2</label>
    </ligand>
</feature>
<feature type="binding site" evidence="3">
    <location>
        <position position="145"/>
    </location>
    <ligand>
        <name>Zn(2+)</name>
        <dbReference type="ChEBI" id="CHEBI:29105"/>
        <label>2</label>
    </ligand>
</feature>
<feature type="binding site" evidence="3">
    <location>
        <position position="163"/>
    </location>
    <ligand>
        <name>Zn(2+)</name>
        <dbReference type="ChEBI" id="CHEBI:29105"/>
        <label>3</label>
    </ligand>
</feature>
<feature type="binding site" evidence="3">
    <location>
        <position position="166"/>
    </location>
    <ligand>
        <name>Zn(2+)</name>
        <dbReference type="ChEBI" id="CHEBI:29105"/>
        <label>3</label>
    </ligand>
</feature>
<feature type="binding site" evidence="3">
    <location>
        <position position="189"/>
    </location>
    <ligand>
        <name>Zn(2+)</name>
        <dbReference type="ChEBI" id="CHEBI:29105"/>
        <label>3</label>
    </ligand>
</feature>
<feature type="binding site" evidence="3">
    <location>
        <position position="193"/>
    </location>
    <ligand>
        <name>Zn(2+)</name>
        <dbReference type="ChEBI" id="CHEBI:29105"/>
        <label>3</label>
    </ligand>
</feature>
<feature type="binding site" evidence="2">
    <location>
        <position position="460"/>
    </location>
    <ligand>
        <name>ATP</name>
        <dbReference type="ChEBI" id="CHEBI:30616"/>
    </ligand>
</feature>
<feature type="binding site" evidence="2">
    <location>
        <begin position="480"/>
        <end position="484"/>
    </location>
    <ligand>
        <name>ATP</name>
        <dbReference type="ChEBI" id="CHEBI:30616"/>
    </ligand>
</feature>
<feature type="binding site" evidence="2">
    <location>
        <position position="650"/>
    </location>
    <ligand>
        <name>ATP</name>
        <dbReference type="ChEBI" id="CHEBI:30616"/>
    </ligand>
</feature>
<feature type="binding site" evidence="2">
    <location>
        <position position="687"/>
    </location>
    <ligand>
        <name>ATP</name>
        <dbReference type="ChEBI" id="CHEBI:30616"/>
    </ligand>
</feature>
<feature type="binding site" evidence="2">
    <location>
        <position position="818"/>
    </location>
    <ligand>
        <name>ATP</name>
        <dbReference type="ChEBI" id="CHEBI:30616"/>
    </ligand>
</feature>
<keyword id="KW-0067">ATP-binding</keyword>
<keyword id="KW-0963">Cytoplasm</keyword>
<keyword id="KW-0347">Helicase</keyword>
<keyword id="KW-0378">Hydrolase</keyword>
<keyword id="KW-0479">Metal-binding</keyword>
<keyword id="KW-0866">Nonsense-mediated mRNA decay</keyword>
<keyword id="KW-0547">Nucleotide-binding</keyword>
<keyword id="KW-1185">Reference proteome</keyword>
<keyword id="KW-0862">Zinc</keyword>
<keyword id="KW-0863">Zinc-finger</keyword>
<comment type="function">
    <text evidence="1">RNA-dependent helicase required for nonsense-mediated decay (NMD) of aberrant mRNAs containing premature stop codons and modulates the expression level of normal mRNAs (By similarity). Also capable of unwinding double-stranded DNA and translocating on single-stranded DNA (By similarity).</text>
</comment>
<comment type="catalytic activity">
    <reaction evidence="1">
        <text>ATP + H2O = ADP + phosphate + H(+)</text>
        <dbReference type="Rhea" id="RHEA:13065"/>
        <dbReference type="ChEBI" id="CHEBI:15377"/>
        <dbReference type="ChEBI" id="CHEBI:15378"/>
        <dbReference type="ChEBI" id="CHEBI:30616"/>
        <dbReference type="ChEBI" id="CHEBI:43474"/>
        <dbReference type="ChEBI" id="CHEBI:456216"/>
        <dbReference type="EC" id="3.6.4.12"/>
    </reaction>
    <physiologicalReaction direction="left-to-right" evidence="1">
        <dbReference type="Rhea" id="RHEA:13066"/>
    </physiologicalReaction>
</comment>
<comment type="catalytic activity">
    <reaction evidence="2">
        <text>ATP + H2O = ADP + phosphate + H(+)</text>
        <dbReference type="Rhea" id="RHEA:13065"/>
        <dbReference type="ChEBI" id="CHEBI:15377"/>
        <dbReference type="ChEBI" id="CHEBI:15378"/>
        <dbReference type="ChEBI" id="CHEBI:30616"/>
        <dbReference type="ChEBI" id="CHEBI:43474"/>
        <dbReference type="ChEBI" id="CHEBI:456216"/>
        <dbReference type="EC" id="3.6.4.13"/>
    </reaction>
    <physiologicalReaction direction="left-to-right" evidence="2">
        <dbReference type="Rhea" id="RHEA:13066"/>
    </physiologicalReaction>
</comment>
<comment type="subcellular location">
    <subcellularLocation>
        <location evidence="1">Cytoplasm</location>
    </subcellularLocation>
    <text evidence="1">Associates with polysomes.</text>
</comment>
<comment type="similarity">
    <text evidence="5">Belongs to the DNA2/NAM7 helicase family.</text>
</comment>
<protein>
    <recommendedName>
        <fullName>Regulator of nonsense transcripts 1 homolog</fullName>
        <ecNumber evidence="1">3.6.4.12</ecNumber>
        <ecNumber evidence="2">3.6.4.13</ecNumber>
    </recommendedName>
</protein>
<accession>Q9HEH1</accession>
<accession>Q7RVU9</accession>
<gene>
    <name type="ORF">2E4.130</name>
    <name type="ORF">NCU04242</name>
</gene>
<reference key="1">
    <citation type="journal article" date="2003" name="Nucleic Acids Res.">
        <title>What's in the genome of a filamentous fungus? Analysis of the Neurospora genome sequence.</title>
        <authorList>
            <person name="Mannhaupt G."/>
            <person name="Montrone C."/>
            <person name="Haase D."/>
            <person name="Mewes H.-W."/>
            <person name="Aign V."/>
            <person name="Hoheisel J.D."/>
            <person name="Fartmann B."/>
            <person name="Nyakatura G."/>
            <person name="Kempken F."/>
            <person name="Maier J."/>
            <person name="Schulte U."/>
        </authorList>
    </citation>
    <scope>NUCLEOTIDE SEQUENCE [LARGE SCALE GENOMIC DNA]</scope>
    <source>
        <strain>ATCC 24698 / 74-OR23-1A / CBS 708.71 / DSM 1257 / FGSC 987</strain>
    </source>
</reference>
<reference key="2">
    <citation type="journal article" date="2003" name="Nature">
        <title>The genome sequence of the filamentous fungus Neurospora crassa.</title>
        <authorList>
            <person name="Galagan J.E."/>
            <person name="Calvo S.E."/>
            <person name="Borkovich K.A."/>
            <person name="Selker E.U."/>
            <person name="Read N.D."/>
            <person name="Jaffe D.B."/>
            <person name="FitzHugh W."/>
            <person name="Ma L.-J."/>
            <person name="Smirnov S."/>
            <person name="Purcell S."/>
            <person name="Rehman B."/>
            <person name="Elkins T."/>
            <person name="Engels R."/>
            <person name="Wang S."/>
            <person name="Nielsen C.B."/>
            <person name="Butler J."/>
            <person name="Endrizzi M."/>
            <person name="Qui D."/>
            <person name="Ianakiev P."/>
            <person name="Bell-Pedersen D."/>
            <person name="Nelson M.A."/>
            <person name="Werner-Washburne M."/>
            <person name="Selitrennikoff C.P."/>
            <person name="Kinsey J.A."/>
            <person name="Braun E.L."/>
            <person name="Zelter A."/>
            <person name="Schulte U."/>
            <person name="Kothe G.O."/>
            <person name="Jedd G."/>
            <person name="Mewes H.-W."/>
            <person name="Staben C."/>
            <person name="Marcotte E."/>
            <person name="Greenberg D."/>
            <person name="Roy A."/>
            <person name="Foley K."/>
            <person name="Naylor J."/>
            <person name="Stange-Thomann N."/>
            <person name="Barrett R."/>
            <person name="Gnerre S."/>
            <person name="Kamal M."/>
            <person name="Kamvysselis M."/>
            <person name="Mauceli E.W."/>
            <person name="Bielke C."/>
            <person name="Rudd S."/>
            <person name="Frishman D."/>
            <person name="Krystofova S."/>
            <person name="Rasmussen C."/>
            <person name="Metzenberg R.L."/>
            <person name="Perkins D.D."/>
            <person name="Kroken S."/>
            <person name="Cogoni C."/>
            <person name="Macino G."/>
            <person name="Catcheside D.E.A."/>
            <person name="Li W."/>
            <person name="Pratt R.J."/>
            <person name="Osmani S.A."/>
            <person name="DeSouza C.P.C."/>
            <person name="Glass N.L."/>
            <person name="Orbach M.J."/>
            <person name="Berglund J.A."/>
            <person name="Voelker R."/>
            <person name="Yarden O."/>
            <person name="Plamann M."/>
            <person name="Seiler S."/>
            <person name="Dunlap J.C."/>
            <person name="Radford A."/>
            <person name="Aramayo R."/>
            <person name="Natvig D.O."/>
            <person name="Alex L.A."/>
            <person name="Mannhaupt G."/>
            <person name="Ebbole D.J."/>
            <person name="Freitag M."/>
            <person name="Paulsen I."/>
            <person name="Sachs M.S."/>
            <person name="Lander E.S."/>
            <person name="Nusbaum C."/>
            <person name="Birren B.W."/>
        </authorList>
    </citation>
    <scope>NUCLEOTIDE SEQUENCE [LARGE SCALE GENOMIC DNA]</scope>
    <source>
        <strain>ATCC 24698 / 74-OR23-1A / CBS 708.71 / DSM 1257 / FGSC 987</strain>
    </source>
</reference>
<evidence type="ECO:0000250" key="1">
    <source>
        <dbReference type="UniProtKB" id="P30771"/>
    </source>
</evidence>
<evidence type="ECO:0000250" key="2">
    <source>
        <dbReference type="UniProtKB" id="Q92900"/>
    </source>
</evidence>
<evidence type="ECO:0000255" key="3">
    <source>
        <dbReference type="PROSITE-ProRule" id="PRU01341"/>
    </source>
</evidence>
<evidence type="ECO:0000256" key="4">
    <source>
        <dbReference type="SAM" id="MobiDB-lite"/>
    </source>
</evidence>
<evidence type="ECO:0000305" key="5"/>
<organism>
    <name type="scientific">Neurospora crassa (strain ATCC 24698 / 74-OR23-1A / CBS 708.71 / DSM 1257 / FGSC 987)</name>
    <dbReference type="NCBI Taxonomy" id="367110"/>
    <lineage>
        <taxon>Eukaryota</taxon>
        <taxon>Fungi</taxon>
        <taxon>Dikarya</taxon>
        <taxon>Ascomycota</taxon>
        <taxon>Pezizomycotina</taxon>
        <taxon>Sordariomycetes</taxon>
        <taxon>Sordariomycetidae</taxon>
        <taxon>Sordariales</taxon>
        <taxon>Sordariaceae</taxon>
        <taxon>Neurospora</taxon>
    </lineage>
</organism>
<dbReference type="EC" id="3.6.4.12" evidence="1"/>
<dbReference type="EC" id="3.6.4.13" evidence="2"/>
<dbReference type="EMBL" id="AL451022">
    <property type="protein sequence ID" value="CAC18314.1"/>
    <property type="molecule type" value="Genomic_DNA"/>
</dbReference>
<dbReference type="EMBL" id="CM002240">
    <property type="protein sequence ID" value="EAA31997.1"/>
    <property type="molecule type" value="Genomic_DNA"/>
</dbReference>
<dbReference type="SMR" id="Q9HEH1"/>
<dbReference type="FunCoup" id="Q9HEH1">
    <property type="interactions" value="1171"/>
</dbReference>
<dbReference type="STRING" id="367110.Q9HEH1"/>
<dbReference type="PaxDb" id="5141-EFNCRP00000003901"/>
<dbReference type="EnsemblFungi" id="EAA31997">
    <property type="protein sequence ID" value="EAA31997"/>
    <property type="gene ID" value="NCU04242"/>
</dbReference>
<dbReference type="KEGG" id="ncr:NCU04242"/>
<dbReference type="VEuPathDB" id="FungiDB:NCU04242"/>
<dbReference type="HOGENOM" id="CLU_001666_4_0_1"/>
<dbReference type="InParanoid" id="Q9HEH1"/>
<dbReference type="OMA" id="QYMQMNG"/>
<dbReference type="OrthoDB" id="6513042at2759"/>
<dbReference type="Proteomes" id="UP000001805">
    <property type="component" value="Chromosome 2, Linkage Group V"/>
</dbReference>
<dbReference type="GO" id="GO:0005737">
    <property type="term" value="C:cytoplasm"/>
    <property type="evidence" value="ECO:0000318"/>
    <property type="project" value="GO_Central"/>
</dbReference>
<dbReference type="GO" id="GO:0005524">
    <property type="term" value="F:ATP binding"/>
    <property type="evidence" value="ECO:0007669"/>
    <property type="project" value="UniProtKB-KW"/>
</dbReference>
<dbReference type="GO" id="GO:0016887">
    <property type="term" value="F:ATP hydrolysis activity"/>
    <property type="evidence" value="ECO:0000250"/>
    <property type="project" value="UniProtKB"/>
</dbReference>
<dbReference type="GO" id="GO:0036121">
    <property type="term" value="F:double-stranded DNA helicase activity"/>
    <property type="evidence" value="ECO:0000250"/>
    <property type="project" value="UniProtKB"/>
</dbReference>
<dbReference type="GO" id="GO:0003723">
    <property type="term" value="F:RNA binding"/>
    <property type="evidence" value="ECO:0000318"/>
    <property type="project" value="GO_Central"/>
</dbReference>
<dbReference type="GO" id="GO:0003724">
    <property type="term" value="F:RNA helicase activity"/>
    <property type="evidence" value="ECO:0000318"/>
    <property type="project" value="GO_Central"/>
</dbReference>
<dbReference type="GO" id="GO:0003697">
    <property type="term" value="F:single-stranded DNA binding"/>
    <property type="evidence" value="ECO:0000250"/>
    <property type="project" value="UniProtKB"/>
</dbReference>
<dbReference type="GO" id="GO:0008270">
    <property type="term" value="F:zinc ion binding"/>
    <property type="evidence" value="ECO:0007669"/>
    <property type="project" value="UniProtKB-KW"/>
</dbReference>
<dbReference type="GO" id="GO:0000184">
    <property type="term" value="P:nuclear-transcribed mRNA catabolic process, nonsense-mediated decay"/>
    <property type="evidence" value="ECO:0000250"/>
    <property type="project" value="UniProtKB"/>
</dbReference>
<dbReference type="CDD" id="cd21407">
    <property type="entry name" value="1B_UPF1-like"/>
    <property type="match status" value="1"/>
</dbReference>
<dbReference type="CDD" id="cd18039">
    <property type="entry name" value="DEXXQc_UPF1"/>
    <property type="match status" value="1"/>
</dbReference>
<dbReference type="CDD" id="cd18808">
    <property type="entry name" value="SF1_C_Upf1"/>
    <property type="match status" value="1"/>
</dbReference>
<dbReference type="CDD" id="cd21400">
    <property type="entry name" value="ZBD_UPF1-like"/>
    <property type="match status" value="1"/>
</dbReference>
<dbReference type="FunFam" id="2.40.30.230:FF:000003">
    <property type="entry name" value="Regulator of nonsense transcripts 1"/>
    <property type="match status" value="1"/>
</dbReference>
<dbReference type="FunFam" id="3.40.50.300:FF:000097">
    <property type="entry name" value="Regulator of nonsense transcripts 1"/>
    <property type="match status" value="1"/>
</dbReference>
<dbReference type="Gene3D" id="2.40.30.230">
    <property type="match status" value="1"/>
</dbReference>
<dbReference type="Gene3D" id="6.10.140.1240">
    <property type="match status" value="1"/>
</dbReference>
<dbReference type="Gene3D" id="3.40.50.300">
    <property type="entry name" value="P-loop containing nucleotide triphosphate hydrolases"/>
    <property type="match status" value="2"/>
</dbReference>
<dbReference type="InterPro" id="IPR045055">
    <property type="entry name" value="DNA2/NAM7-like"/>
</dbReference>
<dbReference type="InterPro" id="IPR041679">
    <property type="entry name" value="DNA2/NAM7-like_C"/>
</dbReference>
<dbReference type="InterPro" id="IPR041677">
    <property type="entry name" value="DNA2/NAM7_AAA_11"/>
</dbReference>
<dbReference type="InterPro" id="IPR006935">
    <property type="entry name" value="Helicase/UvrB_N"/>
</dbReference>
<dbReference type="InterPro" id="IPR014001">
    <property type="entry name" value="Helicase_ATP-bd"/>
</dbReference>
<dbReference type="InterPro" id="IPR027417">
    <property type="entry name" value="P-loop_NTPase"/>
</dbReference>
<dbReference type="InterPro" id="IPR047187">
    <property type="entry name" value="SF1_C_Upf1"/>
</dbReference>
<dbReference type="InterPro" id="IPR040812">
    <property type="entry name" value="UPF1_1B_dom"/>
</dbReference>
<dbReference type="InterPro" id="IPR018999">
    <property type="entry name" value="UPF1_CH/ZBD"/>
</dbReference>
<dbReference type="PANTHER" id="PTHR10887">
    <property type="entry name" value="DNA2/NAM7 HELICASE FAMILY"/>
    <property type="match status" value="1"/>
</dbReference>
<dbReference type="PANTHER" id="PTHR10887:SF364">
    <property type="entry name" value="REGULATOR OF NONSENSE TRANSCRIPTS 1"/>
    <property type="match status" value="1"/>
</dbReference>
<dbReference type="Pfam" id="PF13086">
    <property type="entry name" value="AAA_11"/>
    <property type="match status" value="1"/>
</dbReference>
<dbReference type="Pfam" id="PF13087">
    <property type="entry name" value="AAA_12"/>
    <property type="match status" value="1"/>
</dbReference>
<dbReference type="Pfam" id="PF04851">
    <property type="entry name" value="ResIII"/>
    <property type="match status" value="1"/>
</dbReference>
<dbReference type="Pfam" id="PF18141">
    <property type="entry name" value="UPF1_1B_dom"/>
    <property type="match status" value="1"/>
</dbReference>
<dbReference type="Pfam" id="PF09416">
    <property type="entry name" value="UPF1_Zn_bind"/>
    <property type="match status" value="1"/>
</dbReference>
<dbReference type="SMART" id="SM00487">
    <property type="entry name" value="DEXDc"/>
    <property type="match status" value="1"/>
</dbReference>
<dbReference type="SUPFAM" id="SSF52540">
    <property type="entry name" value="P-loop containing nucleoside triphosphate hydrolases"/>
    <property type="match status" value="1"/>
</dbReference>
<dbReference type="PROSITE" id="PS51997">
    <property type="entry name" value="UPF1_CH_RICH"/>
    <property type="match status" value="1"/>
</dbReference>
<sequence length="1093" mass="120088">MANMEVSFTHLGNHLVSDSAAAIKAGGSDELSNIDPDENLLYGVYGGRGPRGNGRRRHDDDDNETEVLDDDDDESLASVPVDGMKSLKLDAPVEEKELPPHACAYCGIHSPSSVVKCLTCNKWFCSAKGSAFSSHIVNHLVRARHKEVQLHPESSLGDTVLECYNCGTKNVFILGFIPAKSDTVVVLLCRQPCGASTSTKDMSWDISRWQPLIEDRAFLNWLVTPPTDAEQLRARHLTPPMIAKLEEMWKEAPNATVADLEKTAGVDDDPHPVLLKYDDPYHYQNIFGPLVKMESDYDKKLKEAQSEDGLQVRWHLGLNSKHVASFILPKIESGDVKLAVGDEMRLKYKGELRPPWEGVGYVIKIPNNQSDEVEVELRKSANDKSVPTECTHNFSADYVWKATSYDRMQLAMKTFAVDEMSVSGYIFHKLLGHEVQVAPTKITMPKKFHVPGLPELNASQIAAIKQVLSNPLSLIQGPPGTGKTVTSATIIYHLAKMSNSQVLVCAPSNVAVDQLCERIHRTGLKVVRLTAKSREDVESSVSFLALHEQVRMNTTNKELDGLVKLKTETGELSSQDEKRFKQLTRQAEREILQNADVVCCTCVGAGDPRLSKMKFRNVLIDESTQSAEPECMIPLVLGCKQVVLVGDHKQLGPVIMNKKAAKAGLNQSLFERLVKLQFTPIRLKVQYRMHPCLSEFPSNMFYEGSLQNGVTAAERLRKDVDFPWPVPETPMMFWSNLGNEEISASGTSYLNRTEAANVEKIVTRFFKAGVKPADIGVITPYEGQRSYIVNTMQNTGTFKKESYREVEVASVDAFQGREKDFIVLSCVRSNENQGIGFLSDPRRLNVALTRAKYGLVIIGNPKVLCKHELWHHLLVHFKDKKCLVEGPLTNLQPSLLQFGRPRQAYRPQRSHTQHVASGPSNGRFAAPLTAGSVRDYETGSMVSYIPDDVSSIHSSALGGAALSSGYPAMFSNFHPEAWAGLPCAGPNGRPGAKGRGRATESIAGESVANSEFTDATSSVIGGKGIGQGGASLGAGLSEAIGSARPTSYSQSDRLKQYVESNGRMGVGNGYRRYDDDEKSVSTAFASQIGTGFD</sequence>
<proteinExistence type="inferred from homology"/>
<name>RENT1_NEUCR</name>